<protein>
    <recommendedName>
        <fullName evidence="6">Probable ABC transporter arginine-binding protein ArtJ</fullName>
    </recommendedName>
</protein>
<sequence>MCIKRKKTWIAFLAVVCSFCLTGCLKEGGDSNSEKFIVGTNATYPPFEFVDKRGEVVGFDIDLAREISNKLGKTLDVREFSFDALILNLKQHRIDAVITGMSITPSRLKEILMIPYYGEEIKHLVLVFKGENKHPLPLTQYRSVAVQTGTYQEAYLQSLSEVHIRSFDSTLEVLMEVMHGKSPVAVLEPSIAQVVLKDFPALSTATIDLPEDQWVLGYGIGVASDRPALALKIEAAVQEIRKEGVLAELEQKWGLNN</sequence>
<evidence type="ECO:0000250" key="1">
    <source>
        <dbReference type="UniProtKB" id="P30860"/>
    </source>
</evidence>
<evidence type="ECO:0000250" key="2">
    <source>
        <dbReference type="UniProtKB" id="Q9Z869"/>
    </source>
</evidence>
<evidence type="ECO:0000255" key="3"/>
<evidence type="ECO:0000269" key="4">
    <source>
    </source>
</evidence>
<evidence type="ECO:0000303" key="5">
    <source>
    </source>
</evidence>
<evidence type="ECO:0000305" key="6"/>
<evidence type="ECO:0007744" key="7">
    <source>
        <dbReference type="PDB" id="3DEL"/>
    </source>
</evidence>
<evidence type="ECO:0007829" key="8">
    <source>
        <dbReference type="PDB" id="3DEL"/>
    </source>
</evidence>
<accession>O84385</accession>
<proteinExistence type="evidence at protein level"/>
<feature type="signal peptide" evidence="3">
    <location>
        <begin position="1"/>
        <end position="23"/>
    </location>
</feature>
<feature type="chain" id="PRO_0000383474" description="Probable ABC transporter arginine-binding protein ArtJ">
    <location>
        <begin position="24"/>
        <end position="257"/>
    </location>
</feature>
<feature type="binding site" evidence="2">
    <location>
        <position position="41"/>
    </location>
    <ligand>
        <name>L-arginine</name>
        <dbReference type="ChEBI" id="CHEBI:32682"/>
    </ligand>
</feature>
<feature type="binding site" evidence="2">
    <location>
        <position position="48"/>
    </location>
    <ligand>
        <name>L-arginine</name>
        <dbReference type="ChEBI" id="CHEBI:32682"/>
    </ligand>
</feature>
<feature type="binding site" evidence="2">
    <location>
        <position position="100"/>
    </location>
    <ligand>
        <name>L-arginine</name>
        <dbReference type="ChEBI" id="CHEBI:32682"/>
    </ligand>
</feature>
<feature type="binding site" evidence="2">
    <location>
        <position position="102"/>
    </location>
    <ligand>
        <name>L-arginine</name>
        <dbReference type="ChEBI" id="CHEBI:32682"/>
    </ligand>
</feature>
<feature type="binding site" evidence="2">
    <location>
        <position position="107"/>
    </location>
    <ligand>
        <name>L-arginine</name>
        <dbReference type="ChEBI" id="CHEBI:32682"/>
    </ligand>
</feature>
<feature type="binding site" evidence="2">
    <location>
        <position position="151"/>
    </location>
    <ligand>
        <name>L-arginine</name>
        <dbReference type="ChEBI" id="CHEBI:32682"/>
    </ligand>
</feature>
<feature type="strand" evidence="8">
    <location>
        <begin position="35"/>
        <end position="40"/>
    </location>
</feature>
<feature type="turn" evidence="8">
    <location>
        <begin position="45"/>
        <end position="47"/>
    </location>
</feature>
<feature type="strand" evidence="8">
    <location>
        <begin position="48"/>
        <end position="50"/>
    </location>
</feature>
<feature type="strand" evidence="8">
    <location>
        <begin position="56"/>
        <end position="58"/>
    </location>
</feature>
<feature type="helix" evidence="8">
    <location>
        <begin position="59"/>
        <end position="71"/>
    </location>
</feature>
<feature type="strand" evidence="8">
    <location>
        <begin position="74"/>
        <end position="79"/>
    </location>
</feature>
<feature type="helix" evidence="8">
    <location>
        <begin position="82"/>
        <end position="84"/>
    </location>
</feature>
<feature type="helix" evidence="8">
    <location>
        <begin position="85"/>
        <end position="90"/>
    </location>
</feature>
<feature type="strand" evidence="8">
    <location>
        <begin position="93"/>
        <end position="97"/>
    </location>
</feature>
<feature type="strand" evidence="8">
    <location>
        <begin position="99"/>
        <end position="102"/>
    </location>
</feature>
<feature type="helix" evidence="8">
    <location>
        <begin position="105"/>
        <end position="108"/>
    </location>
</feature>
<feature type="strand" evidence="8">
    <location>
        <begin position="111"/>
        <end position="130"/>
    </location>
</feature>
<feature type="helix" evidence="8">
    <location>
        <begin position="138"/>
        <end position="140"/>
    </location>
</feature>
<feature type="strand" evidence="8">
    <location>
        <begin position="144"/>
        <end position="147"/>
    </location>
</feature>
<feature type="helix" evidence="8">
    <location>
        <begin position="151"/>
        <end position="158"/>
    </location>
</feature>
<feature type="strand" evidence="8">
    <location>
        <begin position="164"/>
        <end position="169"/>
    </location>
</feature>
<feature type="helix" evidence="8">
    <location>
        <begin position="170"/>
        <end position="178"/>
    </location>
</feature>
<feature type="strand" evidence="8">
    <location>
        <begin position="181"/>
        <end position="187"/>
    </location>
</feature>
<feature type="helix" evidence="8">
    <location>
        <begin position="189"/>
        <end position="195"/>
    </location>
</feature>
<feature type="helix" evidence="8">
    <location>
        <begin position="196"/>
        <end position="198"/>
    </location>
</feature>
<feature type="strand" evidence="8">
    <location>
        <begin position="202"/>
        <end position="208"/>
    </location>
</feature>
<feature type="helix" evidence="8">
    <location>
        <begin position="211"/>
        <end position="213"/>
    </location>
</feature>
<feature type="strand" evidence="8">
    <location>
        <begin position="215"/>
        <end position="223"/>
    </location>
</feature>
<feature type="helix" evidence="8">
    <location>
        <begin position="227"/>
        <end position="242"/>
    </location>
</feature>
<feature type="helix" evidence="8">
    <location>
        <begin position="245"/>
        <end position="252"/>
    </location>
</feature>
<feature type="helix" evidence="8">
    <location>
        <begin position="255"/>
        <end position="257"/>
    </location>
</feature>
<dbReference type="EMBL" id="AE001273">
    <property type="protein sequence ID" value="AAC67977.1"/>
    <property type="molecule type" value="Genomic_DNA"/>
</dbReference>
<dbReference type="PIR" id="A71522">
    <property type="entry name" value="A71522"/>
</dbReference>
<dbReference type="RefSeq" id="NP_219890.1">
    <property type="nucleotide sequence ID" value="NC_000117.1"/>
</dbReference>
<dbReference type="RefSeq" id="WP_009871733.1">
    <property type="nucleotide sequence ID" value="NC_000117.1"/>
</dbReference>
<dbReference type="PDB" id="3DEL">
    <property type="method" value="X-ray"/>
    <property type="resolution" value="1.92 A"/>
    <property type="chains" value="B/C/D/F=24-257"/>
</dbReference>
<dbReference type="PDBsum" id="3DEL"/>
<dbReference type="SMR" id="O84385"/>
<dbReference type="FunCoup" id="O84385">
    <property type="interactions" value="37"/>
</dbReference>
<dbReference type="STRING" id="272561.CT_381"/>
<dbReference type="EnsemblBacteria" id="AAC67977">
    <property type="protein sequence ID" value="AAC67977"/>
    <property type="gene ID" value="CT_381"/>
</dbReference>
<dbReference type="GeneID" id="884734"/>
<dbReference type="KEGG" id="ctr:CT_381"/>
<dbReference type="PATRIC" id="fig|272561.5.peg.410"/>
<dbReference type="HOGENOM" id="CLU_019602_18_2_0"/>
<dbReference type="InParanoid" id="O84385"/>
<dbReference type="OrthoDB" id="9774451at2"/>
<dbReference type="EvolutionaryTrace" id="O84385"/>
<dbReference type="Proteomes" id="UP000000431">
    <property type="component" value="Chromosome"/>
</dbReference>
<dbReference type="GO" id="GO:0009986">
    <property type="term" value="C:cell surface"/>
    <property type="evidence" value="ECO:0007669"/>
    <property type="project" value="UniProtKB-SubCell"/>
</dbReference>
<dbReference type="GO" id="GO:0005576">
    <property type="term" value="C:extracellular region"/>
    <property type="evidence" value="ECO:0007669"/>
    <property type="project" value="UniProtKB-SubCell"/>
</dbReference>
<dbReference type="GO" id="GO:0030288">
    <property type="term" value="C:outer membrane-bounded periplasmic space"/>
    <property type="evidence" value="ECO:0000318"/>
    <property type="project" value="GO_Central"/>
</dbReference>
<dbReference type="GO" id="GO:0016597">
    <property type="term" value="F:amino acid binding"/>
    <property type="evidence" value="ECO:0000318"/>
    <property type="project" value="GO_Central"/>
</dbReference>
<dbReference type="GO" id="GO:0006865">
    <property type="term" value="P:amino acid transport"/>
    <property type="evidence" value="ECO:0007669"/>
    <property type="project" value="UniProtKB-KW"/>
</dbReference>
<dbReference type="CDD" id="cd00999">
    <property type="entry name" value="PBP2_ArtJ"/>
    <property type="match status" value="1"/>
</dbReference>
<dbReference type="Gene3D" id="3.40.190.10">
    <property type="entry name" value="Periplasmic binding protein-like II"/>
    <property type="match status" value="2"/>
</dbReference>
<dbReference type="InterPro" id="IPR037297">
    <property type="entry name" value="ArtJ_PBP2"/>
</dbReference>
<dbReference type="InterPro" id="IPR001638">
    <property type="entry name" value="Solute-binding_3/MltF_N"/>
</dbReference>
<dbReference type="PANTHER" id="PTHR35936:SF17">
    <property type="entry name" value="ARGININE-BINDING EXTRACELLULAR PROTEIN ARTP"/>
    <property type="match status" value="1"/>
</dbReference>
<dbReference type="PANTHER" id="PTHR35936">
    <property type="entry name" value="MEMBRANE-BOUND LYTIC MUREIN TRANSGLYCOSYLASE F"/>
    <property type="match status" value="1"/>
</dbReference>
<dbReference type="Pfam" id="PF00497">
    <property type="entry name" value="SBP_bac_3"/>
    <property type="match status" value="1"/>
</dbReference>
<dbReference type="SMART" id="SM00062">
    <property type="entry name" value="PBPb"/>
    <property type="match status" value="1"/>
</dbReference>
<dbReference type="SUPFAM" id="SSF53850">
    <property type="entry name" value="Periplasmic binding protein-like II"/>
    <property type="match status" value="1"/>
</dbReference>
<reference key="1">
    <citation type="journal article" date="1998" name="Science">
        <title>Genome sequence of an obligate intracellular pathogen of humans: Chlamydia trachomatis.</title>
        <authorList>
            <person name="Stephens R.S."/>
            <person name="Kalman S."/>
            <person name="Lammel C.J."/>
            <person name="Fan J."/>
            <person name="Marathe R."/>
            <person name="Aravind L."/>
            <person name="Mitchell W.P."/>
            <person name="Olinger L."/>
            <person name="Tatusov R.L."/>
            <person name="Zhao Q."/>
            <person name="Koonin E.V."/>
            <person name="Davis R.W."/>
        </authorList>
    </citation>
    <scope>NUCLEOTIDE SEQUENCE [LARGE SCALE GENOMIC DNA]</scope>
    <source>
        <strain>ATCC VR-885 / DSM 19411 / UW-3/Cx</strain>
    </source>
</reference>
<reference evidence="7" key="2">
    <citation type="journal article" date="2010" name="J. Biol. Chem.">
        <title>Exploiting antigenic diversity for vaccine design: the chlamydia ArtJ paradigm.</title>
        <authorList>
            <person name="Soriani M."/>
            <person name="Petit P."/>
            <person name="Grifantini R."/>
            <person name="Petracca R."/>
            <person name="Gancitano G."/>
            <person name="Frigimelica E."/>
            <person name="Nardelli F."/>
            <person name="Garcia C."/>
            <person name="Spinelli S."/>
            <person name="Scarabelli G."/>
            <person name="Fiorucci S."/>
            <person name="Affentranger R."/>
            <person name="Ferrer-Navarro M."/>
            <person name="Zacharias M."/>
            <person name="Colombo G."/>
            <person name="Vuillard L."/>
            <person name="Daura X."/>
            <person name="Grandi G."/>
        </authorList>
    </citation>
    <scope>X-RAY CRYSTALLOGRAPHY (1.92 ANGSTROMS) OF 24-257</scope>
    <scope>FUNCTION</scope>
    <scope>SUBCELLULAR LOCATION</scope>
    <scope>DOMAIN</scope>
    <scope>SPECIES-SPECIFIC IMMUNOGENICITY</scope>
    <source>
        <strain>ATCC VR-885 / DSM 19411 / UW-3/Cx</strain>
    </source>
</reference>
<gene>
    <name evidence="5" type="primary">artJ</name>
    <name type="ordered locus">CT_381</name>
</gene>
<organism>
    <name type="scientific">Chlamydia trachomatis serovar D (strain ATCC VR-885 / DSM 19411 / UW-3/Cx)</name>
    <dbReference type="NCBI Taxonomy" id="272561"/>
    <lineage>
        <taxon>Bacteria</taxon>
        <taxon>Pseudomonadati</taxon>
        <taxon>Chlamydiota</taxon>
        <taxon>Chlamydiia</taxon>
        <taxon>Chlamydiales</taxon>
        <taxon>Chlamydiaceae</taxon>
        <taxon>Chlamydia/Chlamydophila group</taxon>
        <taxon>Chlamydia</taxon>
    </lineage>
</organism>
<keyword id="KW-0002">3D-structure</keyword>
<keyword id="KW-0029">Amino-acid transport</keyword>
<keyword id="KW-1185">Reference proteome</keyword>
<keyword id="KW-0964">Secreted</keyword>
<keyword id="KW-0732">Signal</keyword>
<keyword id="KW-0813">Transport</keyword>
<comment type="function">
    <text evidence="1 2 4">Probably part of an ABC transporter complex involved in arginine transport (By similarity). Binds arginine (By similarity). Interacts with host epithelial cells, suggesting a role in host-cell adhesion during infection (PubMed:20592031).</text>
</comment>
<comment type="subcellular location">
    <subcellularLocation>
        <location evidence="4">Secreted</location>
    </subcellularLocation>
    <subcellularLocation>
        <location evidence="4">Cell surface</location>
    </subcellularLocation>
</comment>
<comment type="domain">
    <text evidence="4">Contains two domains, D1 and D2, which are both exposed on the surface and bind to epithelial cells.</text>
</comment>
<comment type="miscellaneous">
    <text evidence="4">Does not induce neutralizing antibodies.</text>
</comment>
<comment type="miscellaneous">
    <text evidence="4">This protein, although well conserved among chlamydial species, shows species-specific immunogenicity.</text>
</comment>
<comment type="similarity">
    <text evidence="6">Belongs to the bacterial solute-binding protein 3 family.</text>
</comment>
<name>ARTJ_CHLTR</name>